<name>NADK_ECO7I</name>
<comment type="function">
    <text evidence="1">Involved in the regulation of the intracellular balance of NAD and NADP, and is a key enzyme in the biosynthesis of NADP. Catalyzes specifically the phosphorylation on 2'-hydroxyl of the adenosine moiety of NAD to yield NADP.</text>
</comment>
<comment type="catalytic activity">
    <reaction evidence="1">
        <text>NAD(+) + ATP = ADP + NADP(+) + H(+)</text>
        <dbReference type="Rhea" id="RHEA:18629"/>
        <dbReference type="ChEBI" id="CHEBI:15378"/>
        <dbReference type="ChEBI" id="CHEBI:30616"/>
        <dbReference type="ChEBI" id="CHEBI:57540"/>
        <dbReference type="ChEBI" id="CHEBI:58349"/>
        <dbReference type="ChEBI" id="CHEBI:456216"/>
        <dbReference type="EC" id="2.7.1.23"/>
    </reaction>
</comment>
<comment type="cofactor">
    <cofactor evidence="1">
        <name>a divalent metal cation</name>
        <dbReference type="ChEBI" id="CHEBI:60240"/>
    </cofactor>
</comment>
<comment type="subcellular location">
    <subcellularLocation>
        <location evidence="1">Cytoplasm</location>
    </subcellularLocation>
</comment>
<comment type="similarity">
    <text evidence="1">Belongs to the NAD kinase family.</text>
</comment>
<evidence type="ECO:0000255" key="1">
    <source>
        <dbReference type="HAMAP-Rule" id="MF_00361"/>
    </source>
</evidence>
<dbReference type="EC" id="2.7.1.23" evidence="1"/>
<dbReference type="EMBL" id="CU928164">
    <property type="protein sequence ID" value="CAR18940.1"/>
    <property type="molecule type" value="Genomic_DNA"/>
</dbReference>
<dbReference type="RefSeq" id="WP_001059145.1">
    <property type="nucleotide sequence ID" value="NC_011750.1"/>
</dbReference>
<dbReference type="RefSeq" id="YP_002408755.1">
    <property type="nucleotide sequence ID" value="NC_011750.1"/>
</dbReference>
<dbReference type="SMR" id="B7NSB3"/>
<dbReference type="STRING" id="585057.ECIAI39_2818"/>
<dbReference type="KEGG" id="ect:ECIAI39_2818"/>
<dbReference type="PATRIC" id="fig|585057.6.peg.2925"/>
<dbReference type="HOGENOM" id="CLU_008831_0_1_6"/>
<dbReference type="Proteomes" id="UP000000749">
    <property type="component" value="Chromosome"/>
</dbReference>
<dbReference type="GO" id="GO:0005737">
    <property type="term" value="C:cytoplasm"/>
    <property type="evidence" value="ECO:0007669"/>
    <property type="project" value="UniProtKB-SubCell"/>
</dbReference>
<dbReference type="GO" id="GO:0005524">
    <property type="term" value="F:ATP binding"/>
    <property type="evidence" value="ECO:0007669"/>
    <property type="project" value="UniProtKB-KW"/>
</dbReference>
<dbReference type="GO" id="GO:0046872">
    <property type="term" value="F:metal ion binding"/>
    <property type="evidence" value="ECO:0007669"/>
    <property type="project" value="UniProtKB-UniRule"/>
</dbReference>
<dbReference type="GO" id="GO:0051287">
    <property type="term" value="F:NAD binding"/>
    <property type="evidence" value="ECO:0007669"/>
    <property type="project" value="UniProtKB-ARBA"/>
</dbReference>
<dbReference type="GO" id="GO:0003951">
    <property type="term" value="F:NAD+ kinase activity"/>
    <property type="evidence" value="ECO:0007669"/>
    <property type="project" value="UniProtKB-UniRule"/>
</dbReference>
<dbReference type="GO" id="GO:0019674">
    <property type="term" value="P:NAD metabolic process"/>
    <property type="evidence" value="ECO:0007669"/>
    <property type="project" value="InterPro"/>
</dbReference>
<dbReference type="GO" id="GO:0006741">
    <property type="term" value="P:NADP biosynthetic process"/>
    <property type="evidence" value="ECO:0007669"/>
    <property type="project" value="UniProtKB-UniRule"/>
</dbReference>
<dbReference type="FunFam" id="2.60.200.30:FF:000001">
    <property type="entry name" value="NAD kinase"/>
    <property type="match status" value="1"/>
</dbReference>
<dbReference type="FunFam" id="3.40.50.10330:FF:000004">
    <property type="entry name" value="NAD kinase"/>
    <property type="match status" value="1"/>
</dbReference>
<dbReference type="Gene3D" id="3.40.50.10330">
    <property type="entry name" value="Probable inorganic polyphosphate/atp-NAD kinase, domain 1"/>
    <property type="match status" value="1"/>
</dbReference>
<dbReference type="Gene3D" id="2.60.200.30">
    <property type="entry name" value="Probable inorganic polyphosphate/atp-NAD kinase, domain 2"/>
    <property type="match status" value="1"/>
</dbReference>
<dbReference type="HAMAP" id="MF_00361">
    <property type="entry name" value="NAD_kinase"/>
    <property type="match status" value="1"/>
</dbReference>
<dbReference type="InterPro" id="IPR017438">
    <property type="entry name" value="ATP-NAD_kinase_N"/>
</dbReference>
<dbReference type="InterPro" id="IPR017437">
    <property type="entry name" value="ATP-NAD_kinase_PpnK-typ_C"/>
</dbReference>
<dbReference type="InterPro" id="IPR016064">
    <property type="entry name" value="NAD/diacylglycerol_kinase_sf"/>
</dbReference>
<dbReference type="InterPro" id="IPR002504">
    <property type="entry name" value="NADK"/>
</dbReference>
<dbReference type="NCBIfam" id="NF002306">
    <property type="entry name" value="PRK01231.1"/>
    <property type="match status" value="1"/>
</dbReference>
<dbReference type="NCBIfam" id="NF002893">
    <property type="entry name" value="PRK03378.1"/>
    <property type="match status" value="1"/>
</dbReference>
<dbReference type="PANTHER" id="PTHR20275">
    <property type="entry name" value="NAD KINASE"/>
    <property type="match status" value="1"/>
</dbReference>
<dbReference type="PANTHER" id="PTHR20275:SF0">
    <property type="entry name" value="NAD KINASE"/>
    <property type="match status" value="1"/>
</dbReference>
<dbReference type="Pfam" id="PF01513">
    <property type="entry name" value="NAD_kinase"/>
    <property type="match status" value="1"/>
</dbReference>
<dbReference type="Pfam" id="PF20143">
    <property type="entry name" value="NAD_kinase_C"/>
    <property type="match status" value="1"/>
</dbReference>
<dbReference type="SUPFAM" id="SSF111331">
    <property type="entry name" value="NAD kinase/diacylglycerol kinase-like"/>
    <property type="match status" value="1"/>
</dbReference>
<reference key="1">
    <citation type="journal article" date="2009" name="PLoS Genet.">
        <title>Organised genome dynamics in the Escherichia coli species results in highly diverse adaptive paths.</title>
        <authorList>
            <person name="Touchon M."/>
            <person name="Hoede C."/>
            <person name="Tenaillon O."/>
            <person name="Barbe V."/>
            <person name="Baeriswyl S."/>
            <person name="Bidet P."/>
            <person name="Bingen E."/>
            <person name="Bonacorsi S."/>
            <person name="Bouchier C."/>
            <person name="Bouvet O."/>
            <person name="Calteau A."/>
            <person name="Chiapello H."/>
            <person name="Clermont O."/>
            <person name="Cruveiller S."/>
            <person name="Danchin A."/>
            <person name="Diard M."/>
            <person name="Dossat C."/>
            <person name="Karoui M.E."/>
            <person name="Frapy E."/>
            <person name="Garry L."/>
            <person name="Ghigo J.M."/>
            <person name="Gilles A.M."/>
            <person name="Johnson J."/>
            <person name="Le Bouguenec C."/>
            <person name="Lescat M."/>
            <person name="Mangenot S."/>
            <person name="Martinez-Jehanne V."/>
            <person name="Matic I."/>
            <person name="Nassif X."/>
            <person name="Oztas S."/>
            <person name="Petit M.A."/>
            <person name="Pichon C."/>
            <person name="Rouy Z."/>
            <person name="Ruf C.S."/>
            <person name="Schneider D."/>
            <person name="Tourret J."/>
            <person name="Vacherie B."/>
            <person name="Vallenet D."/>
            <person name="Medigue C."/>
            <person name="Rocha E.P.C."/>
            <person name="Denamur E."/>
        </authorList>
    </citation>
    <scope>NUCLEOTIDE SEQUENCE [LARGE SCALE GENOMIC DNA]</scope>
    <source>
        <strain>IAI39 / ExPEC</strain>
    </source>
</reference>
<gene>
    <name evidence="1" type="primary">nadK</name>
    <name type="ordered locus">ECIAI39_2818</name>
</gene>
<organism>
    <name type="scientific">Escherichia coli O7:K1 (strain IAI39 / ExPEC)</name>
    <dbReference type="NCBI Taxonomy" id="585057"/>
    <lineage>
        <taxon>Bacteria</taxon>
        <taxon>Pseudomonadati</taxon>
        <taxon>Pseudomonadota</taxon>
        <taxon>Gammaproteobacteria</taxon>
        <taxon>Enterobacterales</taxon>
        <taxon>Enterobacteriaceae</taxon>
        <taxon>Escherichia</taxon>
    </lineage>
</organism>
<sequence>MNNHFKCIGIVGHPRHPTALTTHEMLYRWLCAKGYEVIVEQQIAHELQLKNVKTGTLAEIGQLADLAVVVGGDGNMLGAARTLARYDIKVIGINRGNLGFLTDLDPDNAQQQLADVLEGHYIIEKRFLLEAQVCQQDCQKRISTAINEVVLHPGKVAHMIEFEVYIDEIFAFSQRSDGLIISTPTGSTAYSLSAGGPILTPSLDAITLVPMFPHTLSARPLVINSSSTIRLRFSHRRNDLEISCDSQIALPIQEGEDVLIRRCDYHLNLIHPKDYSYFNTLSTKLGWSKKLF</sequence>
<protein>
    <recommendedName>
        <fullName evidence="1">NAD kinase</fullName>
        <ecNumber evidence="1">2.7.1.23</ecNumber>
    </recommendedName>
    <alternativeName>
        <fullName evidence="1">ATP-dependent NAD kinase</fullName>
    </alternativeName>
</protein>
<keyword id="KW-0067">ATP-binding</keyword>
<keyword id="KW-0963">Cytoplasm</keyword>
<keyword id="KW-0418">Kinase</keyword>
<keyword id="KW-0520">NAD</keyword>
<keyword id="KW-0521">NADP</keyword>
<keyword id="KW-0547">Nucleotide-binding</keyword>
<keyword id="KW-0808">Transferase</keyword>
<accession>B7NSB3</accession>
<proteinExistence type="inferred from homology"/>
<feature type="chain" id="PRO_1000120854" description="NAD kinase">
    <location>
        <begin position="1"/>
        <end position="292"/>
    </location>
</feature>
<feature type="active site" description="Proton acceptor" evidence="1">
    <location>
        <position position="73"/>
    </location>
</feature>
<feature type="binding site" evidence="1">
    <location>
        <begin position="73"/>
        <end position="74"/>
    </location>
    <ligand>
        <name>NAD(+)</name>
        <dbReference type="ChEBI" id="CHEBI:57540"/>
    </ligand>
</feature>
<feature type="binding site" evidence="1">
    <location>
        <begin position="147"/>
        <end position="148"/>
    </location>
    <ligand>
        <name>NAD(+)</name>
        <dbReference type="ChEBI" id="CHEBI:57540"/>
    </ligand>
</feature>
<feature type="binding site" evidence="1">
    <location>
        <position position="158"/>
    </location>
    <ligand>
        <name>NAD(+)</name>
        <dbReference type="ChEBI" id="CHEBI:57540"/>
    </ligand>
</feature>
<feature type="binding site" evidence="1">
    <location>
        <position position="175"/>
    </location>
    <ligand>
        <name>NAD(+)</name>
        <dbReference type="ChEBI" id="CHEBI:57540"/>
    </ligand>
</feature>
<feature type="binding site" evidence="1">
    <location>
        <position position="177"/>
    </location>
    <ligand>
        <name>NAD(+)</name>
        <dbReference type="ChEBI" id="CHEBI:57540"/>
    </ligand>
</feature>
<feature type="binding site" evidence="1">
    <location>
        <begin position="188"/>
        <end position="193"/>
    </location>
    <ligand>
        <name>NAD(+)</name>
        <dbReference type="ChEBI" id="CHEBI:57540"/>
    </ligand>
</feature>
<feature type="binding site" evidence="1">
    <location>
        <position position="247"/>
    </location>
    <ligand>
        <name>NAD(+)</name>
        <dbReference type="ChEBI" id="CHEBI:57540"/>
    </ligand>
</feature>